<keyword id="KW-0067">ATP-binding</keyword>
<keyword id="KW-0414">Isoprene biosynthesis</keyword>
<keyword id="KW-0418">Kinase</keyword>
<keyword id="KW-0547">Nucleotide-binding</keyword>
<keyword id="KW-0808">Transferase</keyword>
<reference key="1">
    <citation type="submission" date="2008-02" db="EMBL/GenBank/DDBJ databases">
        <title>Complete sequence of Yersinia pseudotuberculosis YPIII.</title>
        <authorList>
            <consortium name="US DOE Joint Genome Institute"/>
            <person name="Copeland A."/>
            <person name="Lucas S."/>
            <person name="Lapidus A."/>
            <person name="Glavina del Rio T."/>
            <person name="Dalin E."/>
            <person name="Tice H."/>
            <person name="Bruce D."/>
            <person name="Goodwin L."/>
            <person name="Pitluck S."/>
            <person name="Munk A.C."/>
            <person name="Brettin T."/>
            <person name="Detter J.C."/>
            <person name="Han C."/>
            <person name="Tapia R."/>
            <person name="Schmutz J."/>
            <person name="Larimer F."/>
            <person name="Land M."/>
            <person name="Hauser L."/>
            <person name="Challacombe J.F."/>
            <person name="Green L."/>
            <person name="Lindler L.E."/>
            <person name="Nikolich M.P."/>
            <person name="Richardson P."/>
        </authorList>
    </citation>
    <scope>NUCLEOTIDE SEQUENCE [LARGE SCALE GENOMIC DNA]</scope>
    <source>
        <strain>YPIII</strain>
    </source>
</reference>
<sequence length="310" mass="33891">MTTANQPICPSPAKWPSPAKLNLFLYITGQRADGYHQLQTLFQFLDYGDQLTIEPRDDNQIRLLTPIAGVENEQNLIVRAAKMLQKHPGNTPVPRGADISIDKCLPMGGGLGGGSSNAATVLVALNLLWQCGLTDEQLADLGLTLGADVPVFVRGHAAFAEGIGEKLQPAEPVEKWYLVIHPGVNIPTPIIFSDPELKRNTPIRPLAALLSTPYANDCEPIARKRFREVEQALSWLLEYAPSRLTGTGACVFAEFDTESSARQVLSIAPEWLHGFVARGVNVSPLHRVRSGKKLKAVSADNDLQRYVRSK</sequence>
<name>ISPE_YERPY</name>
<proteinExistence type="inferred from homology"/>
<comment type="function">
    <text evidence="1">Catalyzes the phosphorylation of the position 2 hydroxy group of 4-diphosphocytidyl-2C-methyl-D-erythritol.</text>
</comment>
<comment type="catalytic activity">
    <reaction evidence="1">
        <text>4-CDP-2-C-methyl-D-erythritol + ATP = 4-CDP-2-C-methyl-D-erythritol 2-phosphate + ADP + H(+)</text>
        <dbReference type="Rhea" id="RHEA:18437"/>
        <dbReference type="ChEBI" id="CHEBI:15378"/>
        <dbReference type="ChEBI" id="CHEBI:30616"/>
        <dbReference type="ChEBI" id="CHEBI:57823"/>
        <dbReference type="ChEBI" id="CHEBI:57919"/>
        <dbReference type="ChEBI" id="CHEBI:456216"/>
        <dbReference type="EC" id="2.7.1.148"/>
    </reaction>
</comment>
<comment type="pathway">
    <text evidence="1">Isoprenoid biosynthesis; isopentenyl diphosphate biosynthesis via DXP pathway; isopentenyl diphosphate from 1-deoxy-D-xylulose 5-phosphate: step 3/6.</text>
</comment>
<comment type="subunit">
    <text evidence="1">Homodimer.</text>
</comment>
<comment type="similarity">
    <text evidence="1">Belongs to the GHMP kinase family. IspE subfamily.</text>
</comment>
<accession>B1JM88</accession>
<organism>
    <name type="scientific">Yersinia pseudotuberculosis serotype O:3 (strain YPIII)</name>
    <dbReference type="NCBI Taxonomy" id="502800"/>
    <lineage>
        <taxon>Bacteria</taxon>
        <taxon>Pseudomonadati</taxon>
        <taxon>Pseudomonadota</taxon>
        <taxon>Gammaproteobacteria</taxon>
        <taxon>Enterobacterales</taxon>
        <taxon>Yersiniaceae</taxon>
        <taxon>Yersinia</taxon>
    </lineage>
</organism>
<protein>
    <recommendedName>
        <fullName evidence="1">4-diphosphocytidyl-2-C-methyl-D-erythritol kinase</fullName>
        <shortName evidence="1">CMK</shortName>
        <ecNumber evidence="1">2.7.1.148</ecNumber>
    </recommendedName>
    <alternativeName>
        <fullName evidence="1">4-(cytidine-5'-diphospho)-2-C-methyl-D-erythritol kinase</fullName>
    </alternativeName>
</protein>
<gene>
    <name evidence="1" type="primary">ispE</name>
    <name type="ordered locus">YPK_2182</name>
</gene>
<dbReference type="EC" id="2.7.1.148" evidence="1"/>
<dbReference type="EMBL" id="CP000950">
    <property type="protein sequence ID" value="ACA68465.1"/>
    <property type="molecule type" value="Genomic_DNA"/>
</dbReference>
<dbReference type="SMR" id="B1JM88"/>
<dbReference type="KEGG" id="ypy:YPK_2182"/>
<dbReference type="UniPathway" id="UPA00056">
    <property type="reaction ID" value="UER00094"/>
</dbReference>
<dbReference type="GO" id="GO:0050515">
    <property type="term" value="F:4-(cytidine 5'-diphospho)-2-C-methyl-D-erythritol kinase activity"/>
    <property type="evidence" value="ECO:0007669"/>
    <property type="project" value="UniProtKB-UniRule"/>
</dbReference>
<dbReference type="GO" id="GO:0005524">
    <property type="term" value="F:ATP binding"/>
    <property type="evidence" value="ECO:0007669"/>
    <property type="project" value="UniProtKB-UniRule"/>
</dbReference>
<dbReference type="GO" id="GO:0019288">
    <property type="term" value="P:isopentenyl diphosphate biosynthetic process, methylerythritol 4-phosphate pathway"/>
    <property type="evidence" value="ECO:0007669"/>
    <property type="project" value="UniProtKB-UniRule"/>
</dbReference>
<dbReference type="GO" id="GO:0016114">
    <property type="term" value="P:terpenoid biosynthetic process"/>
    <property type="evidence" value="ECO:0007669"/>
    <property type="project" value="InterPro"/>
</dbReference>
<dbReference type="FunFam" id="3.30.230.10:FF:000022">
    <property type="entry name" value="4-diphosphocytidyl-2-C-methyl-D-erythritol kinase"/>
    <property type="match status" value="1"/>
</dbReference>
<dbReference type="FunFam" id="3.30.70.890:FF:000004">
    <property type="entry name" value="4-diphosphocytidyl-2-C-methyl-D-erythritol kinase"/>
    <property type="match status" value="1"/>
</dbReference>
<dbReference type="Gene3D" id="3.30.230.10">
    <property type="match status" value="1"/>
</dbReference>
<dbReference type="Gene3D" id="3.30.70.890">
    <property type="entry name" value="GHMP kinase, C-terminal domain"/>
    <property type="match status" value="1"/>
</dbReference>
<dbReference type="HAMAP" id="MF_00061">
    <property type="entry name" value="IspE"/>
    <property type="match status" value="1"/>
</dbReference>
<dbReference type="InterPro" id="IPR013750">
    <property type="entry name" value="GHMP_kinase_C_dom"/>
</dbReference>
<dbReference type="InterPro" id="IPR036554">
    <property type="entry name" value="GHMP_kinase_C_sf"/>
</dbReference>
<dbReference type="InterPro" id="IPR006204">
    <property type="entry name" value="GHMP_kinase_N_dom"/>
</dbReference>
<dbReference type="InterPro" id="IPR004424">
    <property type="entry name" value="IspE"/>
</dbReference>
<dbReference type="InterPro" id="IPR020568">
    <property type="entry name" value="Ribosomal_Su5_D2-typ_SF"/>
</dbReference>
<dbReference type="InterPro" id="IPR014721">
    <property type="entry name" value="Ribsml_uS5_D2-typ_fold_subgr"/>
</dbReference>
<dbReference type="NCBIfam" id="TIGR00154">
    <property type="entry name" value="ispE"/>
    <property type="match status" value="1"/>
</dbReference>
<dbReference type="PANTHER" id="PTHR43527">
    <property type="entry name" value="4-DIPHOSPHOCYTIDYL-2-C-METHYL-D-ERYTHRITOL KINASE, CHLOROPLASTIC"/>
    <property type="match status" value="1"/>
</dbReference>
<dbReference type="PANTHER" id="PTHR43527:SF2">
    <property type="entry name" value="4-DIPHOSPHOCYTIDYL-2-C-METHYL-D-ERYTHRITOL KINASE, CHLOROPLASTIC"/>
    <property type="match status" value="1"/>
</dbReference>
<dbReference type="Pfam" id="PF08544">
    <property type="entry name" value="GHMP_kinases_C"/>
    <property type="match status" value="1"/>
</dbReference>
<dbReference type="Pfam" id="PF00288">
    <property type="entry name" value="GHMP_kinases_N"/>
    <property type="match status" value="1"/>
</dbReference>
<dbReference type="PIRSF" id="PIRSF010376">
    <property type="entry name" value="IspE"/>
    <property type="match status" value="1"/>
</dbReference>
<dbReference type="SUPFAM" id="SSF55060">
    <property type="entry name" value="GHMP Kinase, C-terminal domain"/>
    <property type="match status" value="1"/>
</dbReference>
<dbReference type="SUPFAM" id="SSF54211">
    <property type="entry name" value="Ribosomal protein S5 domain 2-like"/>
    <property type="match status" value="1"/>
</dbReference>
<feature type="chain" id="PRO_1000092129" description="4-diphosphocytidyl-2-C-methyl-D-erythritol kinase">
    <location>
        <begin position="1"/>
        <end position="310"/>
    </location>
</feature>
<feature type="active site" evidence="1">
    <location>
        <position position="20"/>
    </location>
</feature>
<feature type="active site" evidence="1">
    <location>
        <position position="148"/>
    </location>
</feature>
<feature type="binding site" evidence="1">
    <location>
        <begin position="106"/>
        <end position="116"/>
    </location>
    <ligand>
        <name>ATP</name>
        <dbReference type="ChEBI" id="CHEBI:30616"/>
    </ligand>
</feature>
<evidence type="ECO:0000255" key="1">
    <source>
        <dbReference type="HAMAP-Rule" id="MF_00061"/>
    </source>
</evidence>